<keyword id="KW-0028">Amino-acid biosynthesis</keyword>
<keyword id="KW-0057">Aromatic amino acid biosynthesis</keyword>
<keyword id="KW-0963">Cytoplasm</keyword>
<keyword id="KW-0808">Transferase</keyword>
<protein>
    <recommendedName>
        <fullName evidence="1">3-phosphoshikimate 1-carboxyvinyltransferase</fullName>
        <ecNumber evidence="1">2.5.1.19</ecNumber>
    </recommendedName>
    <alternativeName>
        <fullName evidence="1">5-enolpyruvylshikimate-3-phosphate synthase</fullName>
        <shortName evidence="1">EPSP synthase</shortName>
        <shortName evidence="1">EPSPS</shortName>
    </alternativeName>
</protein>
<comment type="function">
    <text evidence="1">Catalyzes the transfer of the enolpyruvyl moiety of phosphoenolpyruvate (PEP) to the 5-hydroxyl of shikimate-3-phosphate (S3P) to produce enolpyruvyl shikimate-3-phosphate and inorganic phosphate.</text>
</comment>
<comment type="catalytic activity">
    <reaction evidence="1">
        <text>3-phosphoshikimate + phosphoenolpyruvate = 5-O-(1-carboxyvinyl)-3-phosphoshikimate + phosphate</text>
        <dbReference type="Rhea" id="RHEA:21256"/>
        <dbReference type="ChEBI" id="CHEBI:43474"/>
        <dbReference type="ChEBI" id="CHEBI:57701"/>
        <dbReference type="ChEBI" id="CHEBI:58702"/>
        <dbReference type="ChEBI" id="CHEBI:145989"/>
        <dbReference type="EC" id="2.5.1.19"/>
    </reaction>
    <physiologicalReaction direction="left-to-right" evidence="1">
        <dbReference type="Rhea" id="RHEA:21257"/>
    </physiologicalReaction>
</comment>
<comment type="pathway">
    <text evidence="1">Metabolic intermediate biosynthesis; chorismate biosynthesis; chorismate from D-erythrose 4-phosphate and phosphoenolpyruvate: step 6/7.</text>
</comment>
<comment type="subunit">
    <text evidence="1">Monomer.</text>
</comment>
<comment type="subcellular location">
    <subcellularLocation>
        <location evidence="1">Cytoplasm</location>
    </subcellularLocation>
</comment>
<comment type="similarity">
    <text evidence="1">Belongs to the EPSP synthase family.</text>
</comment>
<gene>
    <name evidence="1" type="primary">aroA</name>
    <name type="ordered locus">SA1297</name>
</gene>
<reference key="1">
    <citation type="journal article" date="2001" name="Lancet">
        <title>Whole genome sequencing of meticillin-resistant Staphylococcus aureus.</title>
        <authorList>
            <person name="Kuroda M."/>
            <person name="Ohta T."/>
            <person name="Uchiyama I."/>
            <person name="Baba T."/>
            <person name="Yuzawa H."/>
            <person name="Kobayashi I."/>
            <person name="Cui L."/>
            <person name="Oguchi A."/>
            <person name="Aoki K."/>
            <person name="Nagai Y."/>
            <person name="Lian J.-Q."/>
            <person name="Ito T."/>
            <person name="Kanamori M."/>
            <person name="Matsumaru H."/>
            <person name="Maruyama A."/>
            <person name="Murakami H."/>
            <person name="Hosoyama A."/>
            <person name="Mizutani-Ui Y."/>
            <person name="Takahashi N.K."/>
            <person name="Sawano T."/>
            <person name="Inoue R."/>
            <person name="Kaito C."/>
            <person name="Sekimizu K."/>
            <person name="Hirakawa H."/>
            <person name="Kuhara S."/>
            <person name="Goto S."/>
            <person name="Yabuzaki J."/>
            <person name="Kanehisa M."/>
            <person name="Yamashita A."/>
            <person name="Oshima K."/>
            <person name="Furuya K."/>
            <person name="Yoshino C."/>
            <person name="Shiba T."/>
            <person name="Hattori M."/>
            <person name="Ogasawara N."/>
            <person name="Hayashi H."/>
            <person name="Hiramatsu K."/>
        </authorList>
    </citation>
    <scope>NUCLEOTIDE SEQUENCE [LARGE SCALE GENOMIC DNA]</scope>
    <source>
        <strain>N315</strain>
    </source>
</reference>
<reference key="2">
    <citation type="submission" date="2007-10" db="UniProtKB">
        <title>Shotgun proteomic analysis of total and membrane protein extracts of S. aureus strain N315.</title>
        <authorList>
            <person name="Vaezzadeh A.R."/>
            <person name="Deshusses J."/>
            <person name="Lescuyer P."/>
            <person name="Hochstrasser D.F."/>
        </authorList>
    </citation>
    <scope>IDENTIFICATION BY MASS SPECTROMETRY [LARGE SCALE ANALYSIS]</scope>
    <source>
        <strain>N315</strain>
    </source>
</reference>
<organism>
    <name type="scientific">Staphylococcus aureus (strain N315)</name>
    <dbReference type="NCBI Taxonomy" id="158879"/>
    <lineage>
        <taxon>Bacteria</taxon>
        <taxon>Bacillati</taxon>
        <taxon>Bacillota</taxon>
        <taxon>Bacilli</taxon>
        <taxon>Bacillales</taxon>
        <taxon>Staphylococcaceae</taxon>
        <taxon>Staphylococcus</taxon>
    </lineage>
</organism>
<name>AROA_STAAN</name>
<evidence type="ECO:0000255" key="1">
    <source>
        <dbReference type="HAMAP-Rule" id="MF_00210"/>
    </source>
</evidence>
<sequence>MVSEQIIDISGPLKGEIEVPGDKSMTHRAIMLASLAEGTSNIYKPLLGEDCRRTMDIFRLLGVDIKEDEDKLVVNSPGYKAFKTPHQVLYTGNSGTTTRLLAGLLSGLGIESVLSGDVSIGKRPMDRVLRPLKLMDANIEGIEDNYTPLIIKPSVIKGINYQMEVASAQVKSAILFASLFSNDTTVIKELDVSRNHTETMFRHFNIPIEAERLSITTTPDAIQHIKPADFHVPGDISSAAFFIVAALITPESDVTIHNVGINPTRSGIIDIVEKMGGNIQLFNQTTGAEPTASIRIQYTPMLQPITIEGELVPKAIDELPVIALLCTQAVGTSTIKDAEELKVKETNRIDTTADMLNLLGFELQPTNDGLIIHPSEFKTNATVDSLTDHRIGMMLAVASLLSSEPVKIKQFDAVNVSFPGFLPKLKLLENEG</sequence>
<feature type="chain" id="PRO_0000088292" description="3-phosphoshikimate 1-carboxyvinyltransferase">
    <location>
        <begin position="1"/>
        <end position="432"/>
    </location>
</feature>
<feature type="active site" description="Proton acceptor" evidence="1">
    <location>
        <position position="317"/>
    </location>
</feature>
<feature type="binding site" evidence="1">
    <location>
        <position position="23"/>
    </location>
    <ligand>
        <name>3-phosphoshikimate</name>
        <dbReference type="ChEBI" id="CHEBI:145989"/>
    </ligand>
</feature>
<feature type="binding site" evidence="1">
    <location>
        <position position="23"/>
    </location>
    <ligand>
        <name>phosphoenolpyruvate</name>
        <dbReference type="ChEBI" id="CHEBI:58702"/>
    </ligand>
</feature>
<feature type="binding site" evidence="1">
    <location>
        <position position="24"/>
    </location>
    <ligand>
        <name>3-phosphoshikimate</name>
        <dbReference type="ChEBI" id="CHEBI:145989"/>
    </ligand>
</feature>
<feature type="binding site" evidence="1">
    <location>
        <position position="28"/>
    </location>
    <ligand>
        <name>3-phosphoshikimate</name>
        <dbReference type="ChEBI" id="CHEBI:145989"/>
    </ligand>
</feature>
<feature type="binding site" evidence="1">
    <location>
        <position position="95"/>
    </location>
    <ligand>
        <name>phosphoenolpyruvate</name>
        <dbReference type="ChEBI" id="CHEBI:58702"/>
    </ligand>
</feature>
<feature type="binding site" evidence="1">
    <location>
        <position position="123"/>
    </location>
    <ligand>
        <name>phosphoenolpyruvate</name>
        <dbReference type="ChEBI" id="CHEBI:58702"/>
    </ligand>
</feature>
<feature type="binding site" evidence="1">
    <location>
        <position position="167"/>
    </location>
    <ligand>
        <name>3-phosphoshikimate</name>
        <dbReference type="ChEBI" id="CHEBI:145989"/>
    </ligand>
</feature>
<feature type="binding site" evidence="1">
    <location>
        <position position="169"/>
    </location>
    <ligand>
        <name>3-phosphoshikimate</name>
        <dbReference type="ChEBI" id="CHEBI:145989"/>
    </ligand>
</feature>
<feature type="binding site" evidence="1">
    <location>
        <position position="169"/>
    </location>
    <ligand>
        <name>phosphoenolpyruvate</name>
        <dbReference type="ChEBI" id="CHEBI:58702"/>
    </ligand>
</feature>
<feature type="binding site" evidence="1">
    <location>
        <position position="317"/>
    </location>
    <ligand>
        <name>3-phosphoshikimate</name>
        <dbReference type="ChEBI" id="CHEBI:145989"/>
    </ligand>
</feature>
<feature type="binding site" evidence="1">
    <location>
        <position position="344"/>
    </location>
    <ligand>
        <name>3-phosphoshikimate</name>
        <dbReference type="ChEBI" id="CHEBI:145989"/>
    </ligand>
</feature>
<feature type="binding site" evidence="1">
    <location>
        <position position="348"/>
    </location>
    <ligand>
        <name>phosphoenolpyruvate</name>
        <dbReference type="ChEBI" id="CHEBI:58702"/>
    </ligand>
</feature>
<feature type="binding site" evidence="1">
    <location>
        <position position="390"/>
    </location>
    <ligand>
        <name>phosphoenolpyruvate</name>
        <dbReference type="ChEBI" id="CHEBI:58702"/>
    </ligand>
</feature>
<accession>P63585</accession>
<accession>Q99U25</accession>
<proteinExistence type="evidence at protein level"/>
<dbReference type="EC" id="2.5.1.19" evidence="1"/>
<dbReference type="EMBL" id="BA000018">
    <property type="protein sequence ID" value="BAB42557.1"/>
    <property type="molecule type" value="Genomic_DNA"/>
</dbReference>
<dbReference type="PIR" id="H89924">
    <property type="entry name" value="H89924"/>
</dbReference>
<dbReference type="RefSeq" id="WP_000253231.1">
    <property type="nucleotide sequence ID" value="NC_002745.2"/>
</dbReference>
<dbReference type="SMR" id="P63585"/>
<dbReference type="EnsemblBacteria" id="BAB42557">
    <property type="protein sequence ID" value="BAB42557"/>
    <property type="gene ID" value="BAB42557"/>
</dbReference>
<dbReference type="KEGG" id="sau:SA1297"/>
<dbReference type="HOGENOM" id="CLU_024321_0_1_9"/>
<dbReference type="UniPathway" id="UPA00053">
    <property type="reaction ID" value="UER00089"/>
</dbReference>
<dbReference type="GO" id="GO:0005737">
    <property type="term" value="C:cytoplasm"/>
    <property type="evidence" value="ECO:0007669"/>
    <property type="project" value="UniProtKB-SubCell"/>
</dbReference>
<dbReference type="GO" id="GO:0003866">
    <property type="term" value="F:3-phosphoshikimate 1-carboxyvinyltransferase activity"/>
    <property type="evidence" value="ECO:0007669"/>
    <property type="project" value="UniProtKB-UniRule"/>
</dbReference>
<dbReference type="GO" id="GO:0008652">
    <property type="term" value="P:amino acid biosynthetic process"/>
    <property type="evidence" value="ECO:0007669"/>
    <property type="project" value="UniProtKB-KW"/>
</dbReference>
<dbReference type="GO" id="GO:0009073">
    <property type="term" value="P:aromatic amino acid family biosynthetic process"/>
    <property type="evidence" value="ECO:0007669"/>
    <property type="project" value="UniProtKB-KW"/>
</dbReference>
<dbReference type="GO" id="GO:0009423">
    <property type="term" value="P:chorismate biosynthetic process"/>
    <property type="evidence" value="ECO:0007669"/>
    <property type="project" value="UniProtKB-UniRule"/>
</dbReference>
<dbReference type="CDD" id="cd01556">
    <property type="entry name" value="EPSP_synthase"/>
    <property type="match status" value="1"/>
</dbReference>
<dbReference type="FunFam" id="3.65.10.10:FF:000005">
    <property type="entry name" value="3-phosphoshikimate 1-carboxyvinyltransferase"/>
    <property type="match status" value="1"/>
</dbReference>
<dbReference type="FunFam" id="3.65.10.10:FF:000006">
    <property type="entry name" value="3-phosphoshikimate 1-carboxyvinyltransferase"/>
    <property type="match status" value="1"/>
</dbReference>
<dbReference type="Gene3D" id="3.65.10.10">
    <property type="entry name" value="Enolpyruvate transferase domain"/>
    <property type="match status" value="2"/>
</dbReference>
<dbReference type="HAMAP" id="MF_00210">
    <property type="entry name" value="EPSP_synth"/>
    <property type="match status" value="1"/>
</dbReference>
<dbReference type="InterPro" id="IPR001986">
    <property type="entry name" value="Enolpyruvate_Tfrase_dom"/>
</dbReference>
<dbReference type="InterPro" id="IPR036968">
    <property type="entry name" value="Enolpyruvate_Tfrase_sf"/>
</dbReference>
<dbReference type="InterPro" id="IPR006264">
    <property type="entry name" value="EPSP_synthase"/>
</dbReference>
<dbReference type="InterPro" id="IPR023193">
    <property type="entry name" value="EPSP_synthase_CS"/>
</dbReference>
<dbReference type="InterPro" id="IPR013792">
    <property type="entry name" value="RNA3'P_cycl/enolpyr_Trfase_a/b"/>
</dbReference>
<dbReference type="NCBIfam" id="TIGR01356">
    <property type="entry name" value="aroA"/>
    <property type="match status" value="1"/>
</dbReference>
<dbReference type="PANTHER" id="PTHR21090">
    <property type="entry name" value="AROM/DEHYDROQUINATE SYNTHASE"/>
    <property type="match status" value="1"/>
</dbReference>
<dbReference type="PANTHER" id="PTHR21090:SF5">
    <property type="entry name" value="PENTAFUNCTIONAL AROM POLYPEPTIDE"/>
    <property type="match status" value="1"/>
</dbReference>
<dbReference type="Pfam" id="PF00275">
    <property type="entry name" value="EPSP_synthase"/>
    <property type="match status" value="1"/>
</dbReference>
<dbReference type="PIRSF" id="PIRSF000505">
    <property type="entry name" value="EPSPS"/>
    <property type="match status" value="1"/>
</dbReference>
<dbReference type="SUPFAM" id="SSF55205">
    <property type="entry name" value="EPT/RTPC-like"/>
    <property type="match status" value="1"/>
</dbReference>
<dbReference type="PROSITE" id="PS00104">
    <property type="entry name" value="EPSP_SYNTHASE_1"/>
    <property type="match status" value="1"/>
</dbReference>
<dbReference type="PROSITE" id="PS00885">
    <property type="entry name" value="EPSP_SYNTHASE_2"/>
    <property type="match status" value="1"/>
</dbReference>